<organism>
    <name type="scientific">Salmonella typhimurium (strain LT2 / SGSC1412 / ATCC 700720)</name>
    <dbReference type="NCBI Taxonomy" id="99287"/>
    <lineage>
        <taxon>Bacteria</taxon>
        <taxon>Pseudomonadati</taxon>
        <taxon>Pseudomonadota</taxon>
        <taxon>Gammaproteobacteria</taxon>
        <taxon>Enterobacterales</taxon>
        <taxon>Enterobacteriaceae</taxon>
        <taxon>Salmonella</taxon>
    </lineage>
</organism>
<reference key="1">
    <citation type="journal article" date="2001" name="Nature">
        <title>Complete genome sequence of Salmonella enterica serovar Typhimurium LT2.</title>
        <authorList>
            <person name="McClelland M."/>
            <person name="Sanderson K.E."/>
            <person name="Spieth J."/>
            <person name="Clifton S.W."/>
            <person name="Latreille P."/>
            <person name="Courtney L."/>
            <person name="Porwollik S."/>
            <person name="Ali J."/>
            <person name="Dante M."/>
            <person name="Du F."/>
            <person name="Hou S."/>
            <person name="Layman D."/>
            <person name="Leonard S."/>
            <person name="Nguyen C."/>
            <person name="Scott K."/>
            <person name="Holmes A."/>
            <person name="Grewal N."/>
            <person name="Mulvaney E."/>
            <person name="Ryan E."/>
            <person name="Sun H."/>
            <person name="Florea L."/>
            <person name="Miller W."/>
            <person name="Stoneking T."/>
            <person name="Nhan M."/>
            <person name="Waterston R."/>
            <person name="Wilson R.K."/>
        </authorList>
    </citation>
    <scope>NUCLEOTIDE SEQUENCE [LARGE SCALE GENOMIC DNA]</scope>
    <source>
        <strain>LT2 / SGSC1412 / ATCC 700720</strain>
    </source>
</reference>
<reference key="2">
    <citation type="journal article" date="1990" name="Proc. Natl. Acad. Sci. U.S.A.">
        <title>Autogenous suppression of an opal mutation in the gene encoding peptide chain release factor 2.</title>
        <authorList>
            <person name="Kawakami K."/>
            <person name="Nakamura Y."/>
        </authorList>
    </citation>
    <scope>NUCLEOTIDE SEQUENCE [GENOMIC DNA] OF 1-31</scope>
</reference>
<name>SYK1_SALTY</name>
<sequence length="505" mass="57575">MSEQNAQGADEVVDLNNEMKARREKLAALREQGIPFPNDFRRDRTSDQLHAEFDAKEAEELEALNIEVSVAGRMMTRRIMGKASFVTLQDVGGRIQLYVARDDLPEGVYNEQFKKWDLGDILGAKGKLFKTKTGELSIHCTELRLLTKALRPLPDKFHGLQDQEARYRQRYLDLISNDESRNTFKTRSKILAGIRQFMVARGFMEVETPMMQVIPGGASARPFITHHNALDLDMYLRIAPELYLKRLVVGGFERVFEINRNFRNEGISVRHNPEFTMMELYMAYADYKDLIELTESLFRTLAQDVLGTTQVPYGDEVFDFGKPFEKLTMREAIKKYRPETDMADLDNFDSAKAIAESIGIHVEKSWGLGRIVTEIFDEVAEAHLIQPTFITEYPAEVSPLARRNDVNPEITDRFEFFIGGREIGNGFSELNDAEDQAQRFLDQVNAKAAGDDEAMFYDEDYVTALEHGLPPTAGLGIGIDRMVMLFTNSHTIRDVILFPAMRPVK</sequence>
<dbReference type="EC" id="6.1.1.6"/>
<dbReference type="EMBL" id="AE006468">
    <property type="protein sequence ID" value="AAL21915.1"/>
    <property type="molecule type" value="Genomic_DNA"/>
</dbReference>
<dbReference type="EMBL" id="M38590">
    <property type="protein sequence ID" value="AAA72915.1"/>
    <property type="molecule type" value="Genomic_DNA"/>
</dbReference>
<dbReference type="RefSeq" id="NP_461956.1">
    <property type="nucleotide sequence ID" value="NC_003197.2"/>
</dbReference>
<dbReference type="RefSeq" id="WP_000003339.1">
    <property type="nucleotide sequence ID" value="NC_003197.2"/>
</dbReference>
<dbReference type="SMR" id="P28354"/>
<dbReference type="STRING" id="99287.STM3040"/>
<dbReference type="PaxDb" id="99287-STM3040"/>
<dbReference type="GeneID" id="1254563"/>
<dbReference type="KEGG" id="stm:STM3040"/>
<dbReference type="PATRIC" id="fig|99287.12.peg.3220"/>
<dbReference type="HOGENOM" id="CLU_008255_6_0_6"/>
<dbReference type="OMA" id="DFRNEGM"/>
<dbReference type="PhylomeDB" id="P28354"/>
<dbReference type="BioCyc" id="SENT99287:STM3040-MONOMER"/>
<dbReference type="Proteomes" id="UP000001014">
    <property type="component" value="Chromosome"/>
</dbReference>
<dbReference type="GO" id="GO:0005737">
    <property type="term" value="C:cytoplasm"/>
    <property type="evidence" value="ECO:0000318"/>
    <property type="project" value="GO_Central"/>
</dbReference>
<dbReference type="GO" id="GO:0005829">
    <property type="term" value="C:cytosol"/>
    <property type="evidence" value="ECO:0000318"/>
    <property type="project" value="GO_Central"/>
</dbReference>
<dbReference type="GO" id="GO:0005524">
    <property type="term" value="F:ATP binding"/>
    <property type="evidence" value="ECO:0007669"/>
    <property type="project" value="UniProtKB-UniRule"/>
</dbReference>
<dbReference type="GO" id="GO:0004824">
    <property type="term" value="F:lysine-tRNA ligase activity"/>
    <property type="evidence" value="ECO:0000318"/>
    <property type="project" value="GO_Central"/>
</dbReference>
<dbReference type="GO" id="GO:0000287">
    <property type="term" value="F:magnesium ion binding"/>
    <property type="evidence" value="ECO:0007669"/>
    <property type="project" value="UniProtKB-UniRule"/>
</dbReference>
<dbReference type="GO" id="GO:0000049">
    <property type="term" value="F:tRNA binding"/>
    <property type="evidence" value="ECO:0000318"/>
    <property type="project" value="GO_Central"/>
</dbReference>
<dbReference type="GO" id="GO:0006430">
    <property type="term" value="P:lysyl-tRNA aminoacylation"/>
    <property type="evidence" value="ECO:0000318"/>
    <property type="project" value="GO_Central"/>
</dbReference>
<dbReference type="CDD" id="cd00775">
    <property type="entry name" value="LysRS_core"/>
    <property type="match status" value="1"/>
</dbReference>
<dbReference type="CDD" id="cd04322">
    <property type="entry name" value="LysRS_N"/>
    <property type="match status" value="1"/>
</dbReference>
<dbReference type="FunFam" id="2.40.50.140:FF:000024">
    <property type="entry name" value="Lysine--tRNA ligase"/>
    <property type="match status" value="1"/>
</dbReference>
<dbReference type="FunFam" id="3.30.930.10:FF:000001">
    <property type="entry name" value="Lysine--tRNA ligase"/>
    <property type="match status" value="1"/>
</dbReference>
<dbReference type="Gene3D" id="3.30.930.10">
    <property type="entry name" value="Bira Bifunctional Protein, Domain 2"/>
    <property type="match status" value="1"/>
</dbReference>
<dbReference type="Gene3D" id="2.40.50.140">
    <property type="entry name" value="Nucleic acid-binding proteins"/>
    <property type="match status" value="1"/>
</dbReference>
<dbReference type="HAMAP" id="MF_00252">
    <property type="entry name" value="Lys_tRNA_synth_class2"/>
    <property type="match status" value="1"/>
</dbReference>
<dbReference type="InterPro" id="IPR004364">
    <property type="entry name" value="Aa-tRNA-synt_II"/>
</dbReference>
<dbReference type="InterPro" id="IPR006195">
    <property type="entry name" value="aa-tRNA-synth_II"/>
</dbReference>
<dbReference type="InterPro" id="IPR045864">
    <property type="entry name" value="aa-tRNA-synth_II/BPL/LPL"/>
</dbReference>
<dbReference type="InterPro" id="IPR002313">
    <property type="entry name" value="Lys-tRNA-ligase_II"/>
</dbReference>
<dbReference type="InterPro" id="IPR034762">
    <property type="entry name" value="Lys-tRNA-ligase_II_bac/euk"/>
</dbReference>
<dbReference type="InterPro" id="IPR044136">
    <property type="entry name" value="Lys-tRNA-ligase_II_N"/>
</dbReference>
<dbReference type="InterPro" id="IPR018149">
    <property type="entry name" value="Lys-tRNA-synth_II_C"/>
</dbReference>
<dbReference type="InterPro" id="IPR012340">
    <property type="entry name" value="NA-bd_OB-fold"/>
</dbReference>
<dbReference type="InterPro" id="IPR004365">
    <property type="entry name" value="NA-bd_OB_tRNA"/>
</dbReference>
<dbReference type="NCBIfam" id="TIGR00499">
    <property type="entry name" value="lysS_bact"/>
    <property type="match status" value="1"/>
</dbReference>
<dbReference type="NCBIfam" id="NF001756">
    <property type="entry name" value="PRK00484.1"/>
    <property type="match status" value="1"/>
</dbReference>
<dbReference type="NCBIfam" id="NF009101">
    <property type="entry name" value="PRK12445.1"/>
    <property type="match status" value="1"/>
</dbReference>
<dbReference type="PANTHER" id="PTHR42918:SF15">
    <property type="entry name" value="LYSINE--TRNA LIGASE, CHLOROPLASTIC_MITOCHONDRIAL"/>
    <property type="match status" value="1"/>
</dbReference>
<dbReference type="PANTHER" id="PTHR42918">
    <property type="entry name" value="LYSYL-TRNA SYNTHETASE"/>
    <property type="match status" value="1"/>
</dbReference>
<dbReference type="Pfam" id="PF00152">
    <property type="entry name" value="tRNA-synt_2"/>
    <property type="match status" value="1"/>
</dbReference>
<dbReference type="Pfam" id="PF01336">
    <property type="entry name" value="tRNA_anti-codon"/>
    <property type="match status" value="1"/>
</dbReference>
<dbReference type="PIRSF" id="PIRSF039101">
    <property type="entry name" value="LysRS2"/>
    <property type="match status" value="1"/>
</dbReference>
<dbReference type="PRINTS" id="PR00982">
    <property type="entry name" value="TRNASYNTHLYS"/>
</dbReference>
<dbReference type="SUPFAM" id="SSF55681">
    <property type="entry name" value="Class II aaRS and biotin synthetases"/>
    <property type="match status" value="1"/>
</dbReference>
<dbReference type="SUPFAM" id="SSF50249">
    <property type="entry name" value="Nucleic acid-binding proteins"/>
    <property type="match status" value="1"/>
</dbReference>
<dbReference type="PROSITE" id="PS50862">
    <property type="entry name" value="AA_TRNA_LIGASE_II"/>
    <property type="match status" value="1"/>
</dbReference>
<accession>P28354</accession>
<gene>
    <name type="primary">lysS</name>
    <name type="synonym">herC</name>
    <name type="ordered locus">STM3040</name>
</gene>
<keyword id="KW-0030">Aminoacyl-tRNA synthetase</keyword>
<keyword id="KW-0067">ATP-binding</keyword>
<keyword id="KW-0963">Cytoplasm</keyword>
<keyword id="KW-0436">Ligase</keyword>
<keyword id="KW-0460">Magnesium</keyword>
<keyword id="KW-0479">Metal-binding</keyword>
<keyword id="KW-0547">Nucleotide-binding</keyword>
<keyword id="KW-0648">Protein biosynthesis</keyword>
<keyword id="KW-1185">Reference proteome</keyword>
<proteinExistence type="inferred from homology"/>
<evidence type="ECO:0000250" key="1"/>
<evidence type="ECO:0000305" key="2"/>
<feature type="initiator methionine" description="Removed" evidence="1">
    <location>
        <position position="1"/>
    </location>
</feature>
<feature type="chain" id="PRO_0000152626" description="Lysine--tRNA ligase">
    <location>
        <begin position="2"/>
        <end position="505"/>
    </location>
</feature>
<feature type="binding site" evidence="1">
    <location>
        <position position="415"/>
    </location>
    <ligand>
        <name>Mg(2+)</name>
        <dbReference type="ChEBI" id="CHEBI:18420"/>
        <label>1</label>
    </ligand>
</feature>
<feature type="binding site" evidence="1">
    <location>
        <position position="422"/>
    </location>
    <ligand>
        <name>Mg(2+)</name>
        <dbReference type="ChEBI" id="CHEBI:18420"/>
        <label>1</label>
    </ligand>
</feature>
<feature type="binding site" evidence="1">
    <location>
        <position position="422"/>
    </location>
    <ligand>
        <name>Mg(2+)</name>
        <dbReference type="ChEBI" id="CHEBI:18420"/>
        <label>2</label>
    </ligand>
</feature>
<protein>
    <recommendedName>
        <fullName>Lysine--tRNA ligase</fullName>
        <ecNumber>6.1.1.6</ecNumber>
    </recommendedName>
    <alternativeName>
        <fullName>Lysyl-tRNA synthetase</fullName>
        <shortName>LysRS</shortName>
    </alternativeName>
</protein>
<comment type="catalytic activity">
    <reaction>
        <text>tRNA(Lys) + L-lysine + ATP = L-lysyl-tRNA(Lys) + AMP + diphosphate</text>
        <dbReference type="Rhea" id="RHEA:20792"/>
        <dbReference type="Rhea" id="RHEA-COMP:9696"/>
        <dbReference type="Rhea" id="RHEA-COMP:9697"/>
        <dbReference type="ChEBI" id="CHEBI:30616"/>
        <dbReference type="ChEBI" id="CHEBI:32551"/>
        <dbReference type="ChEBI" id="CHEBI:33019"/>
        <dbReference type="ChEBI" id="CHEBI:78442"/>
        <dbReference type="ChEBI" id="CHEBI:78529"/>
        <dbReference type="ChEBI" id="CHEBI:456215"/>
        <dbReference type="EC" id="6.1.1.6"/>
    </reaction>
</comment>
<comment type="cofactor">
    <cofactor evidence="1">
        <name>Mg(2+)</name>
        <dbReference type="ChEBI" id="CHEBI:18420"/>
    </cofactor>
    <text evidence="1">Binds 3 Mg(2+) ions per subunit.</text>
</comment>
<comment type="subunit">
    <text>Homodimer.</text>
</comment>
<comment type="subcellular location">
    <subcellularLocation>
        <location evidence="1">Cytoplasm</location>
    </subcellularLocation>
</comment>
<comment type="similarity">
    <text evidence="2">Belongs to the class-II aminoacyl-tRNA synthetase family.</text>
</comment>